<proteinExistence type="inferred from homology"/>
<name>RRF_OLEA2</name>
<feature type="chain" id="PRO_0000341008" description="Ribosome-recycling factor">
    <location>
        <begin position="1"/>
        <end position="184"/>
    </location>
</feature>
<accession>Q313G7</accession>
<sequence length="184" mass="20821">MDTILLETEERMEKAVAALDREFGRLRTGRASTSLVDSIKVDYYGTPTPINQLASVAVPDSRTITIQPWDRGAFALVEKAIMQSDLGLTPINDGKIIRISMPPLTEERRKELVKVAKKYTEDAKVAVRNIRRDANEQIKKMEKDKAITEDDMKRGQDEVQKLTDAFVAKSEKVLAKKEKEIMEV</sequence>
<organism>
    <name type="scientific">Oleidesulfovibrio alaskensis (strain ATCC BAA-1058 / DSM 17464 / G20)</name>
    <name type="common">Desulfovibrio alaskensis</name>
    <dbReference type="NCBI Taxonomy" id="207559"/>
    <lineage>
        <taxon>Bacteria</taxon>
        <taxon>Pseudomonadati</taxon>
        <taxon>Thermodesulfobacteriota</taxon>
        <taxon>Desulfovibrionia</taxon>
        <taxon>Desulfovibrionales</taxon>
        <taxon>Desulfovibrionaceae</taxon>
        <taxon>Oleidesulfovibrio</taxon>
    </lineage>
</organism>
<comment type="function">
    <text evidence="1">Responsible for the release of ribosomes from messenger RNA at the termination of protein biosynthesis. May increase the efficiency of translation by recycling ribosomes from one round of translation to another.</text>
</comment>
<comment type="subcellular location">
    <subcellularLocation>
        <location evidence="1">Cytoplasm</location>
    </subcellularLocation>
</comment>
<comment type="similarity">
    <text evidence="1">Belongs to the RRF family.</text>
</comment>
<gene>
    <name evidence="1" type="primary">frr</name>
    <name type="ordered locus">Dde_1128</name>
</gene>
<protein>
    <recommendedName>
        <fullName evidence="1">Ribosome-recycling factor</fullName>
        <shortName evidence="1">RRF</shortName>
    </recommendedName>
    <alternativeName>
        <fullName evidence="1">Ribosome-releasing factor</fullName>
    </alternativeName>
</protein>
<keyword id="KW-0963">Cytoplasm</keyword>
<keyword id="KW-0648">Protein biosynthesis</keyword>
<keyword id="KW-1185">Reference proteome</keyword>
<reference key="1">
    <citation type="journal article" date="2011" name="J. Bacteriol.">
        <title>Complete genome sequence and updated annotation of Desulfovibrio alaskensis G20.</title>
        <authorList>
            <person name="Hauser L.J."/>
            <person name="Land M.L."/>
            <person name="Brown S.D."/>
            <person name="Larimer F."/>
            <person name="Keller K.L."/>
            <person name="Rapp-Giles B.J."/>
            <person name="Price M.N."/>
            <person name="Lin M."/>
            <person name="Bruce D.C."/>
            <person name="Detter J.C."/>
            <person name="Tapia R."/>
            <person name="Han C.S."/>
            <person name="Goodwin L.A."/>
            <person name="Cheng J.F."/>
            <person name="Pitluck S."/>
            <person name="Copeland A."/>
            <person name="Lucas S."/>
            <person name="Nolan M."/>
            <person name="Lapidus A.L."/>
            <person name="Palumbo A.V."/>
            <person name="Wall J.D."/>
        </authorList>
    </citation>
    <scope>NUCLEOTIDE SEQUENCE [LARGE SCALE GENOMIC DNA]</scope>
    <source>
        <strain>ATCC BAA-1058 / DSM 17464 / G20</strain>
    </source>
</reference>
<evidence type="ECO:0000255" key="1">
    <source>
        <dbReference type="HAMAP-Rule" id="MF_00040"/>
    </source>
</evidence>
<dbReference type="EMBL" id="CP000112">
    <property type="protein sequence ID" value="ABB37929.1"/>
    <property type="molecule type" value="Genomic_DNA"/>
</dbReference>
<dbReference type="RefSeq" id="WP_011367155.1">
    <property type="nucleotide sequence ID" value="NC_007519.1"/>
</dbReference>
<dbReference type="SMR" id="Q313G7"/>
<dbReference type="STRING" id="207559.Dde_1128"/>
<dbReference type="KEGG" id="dde:Dde_1128"/>
<dbReference type="eggNOG" id="COG0233">
    <property type="taxonomic scope" value="Bacteria"/>
</dbReference>
<dbReference type="HOGENOM" id="CLU_073981_2_0_7"/>
<dbReference type="Proteomes" id="UP000002710">
    <property type="component" value="Chromosome"/>
</dbReference>
<dbReference type="GO" id="GO:0005829">
    <property type="term" value="C:cytosol"/>
    <property type="evidence" value="ECO:0007669"/>
    <property type="project" value="GOC"/>
</dbReference>
<dbReference type="GO" id="GO:0043023">
    <property type="term" value="F:ribosomal large subunit binding"/>
    <property type="evidence" value="ECO:0007669"/>
    <property type="project" value="TreeGrafter"/>
</dbReference>
<dbReference type="GO" id="GO:0002184">
    <property type="term" value="P:cytoplasmic translational termination"/>
    <property type="evidence" value="ECO:0007669"/>
    <property type="project" value="TreeGrafter"/>
</dbReference>
<dbReference type="CDD" id="cd00520">
    <property type="entry name" value="RRF"/>
    <property type="match status" value="1"/>
</dbReference>
<dbReference type="FunFam" id="1.10.132.20:FF:000001">
    <property type="entry name" value="Ribosome-recycling factor"/>
    <property type="match status" value="1"/>
</dbReference>
<dbReference type="FunFam" id="3.30.1360.40:FF:000001">
    <property type="entry name" value="Ribosome-recycling factor"/>
    <property type="match status" value="1"/>
</dbReference>
<dbReference type="Gene3D" id="3.30.1360.40">
    <property type="match status" value="1"/>
</dbReference>
<dbReference type="Gene3D" id="1.10.132.20">
    <property type="entry name" value="Ribosome-recycling factor"/>
    <property type="match status" value="1"/>
</dbReference>
<dbReference type="HAMAP" id="MF_00040">
    <property type="entry name" value="RRF"/>
    <property type="match status" value="1"/>
</dbReference>
<dbReference type="InterPro" id="IPR002661">
    <property type="entry name" value="Ribosome_recyc_fac"/>
</dbReference>
<dbReference type="InterPro" id="IPR023584">
    <property type="entry name" value="Ribosome_recyc_fac_dom"/>
</dbReference>
<dbReference type="InterPro" id="IPR036191">
    <property type="entry name" value="RRF_sf"/>
</dbReference>
<dbReference type="NCBIfam" id="TIGR00496">
    <property type="entry name" value="frr"/>
    <property type="match status" value="1"/>
</dbReference>
<dbReference type="PANTHER" id="PTHR20982:SF3">
    <property type="entry name" value="MITOCHONDRIAL RIBOSOME RECYCLING FACTOR PSEUDO 1"/>
    <property type="match status" value="1"/>
</dbReference>
<dbReference type="PANTHER" id="PTHR20982">
    <property type="entry name" value="RIBOSOME RECYCLING FACTOR"/>
    <property type="match status" value="1"/>
</dbReference>
<dbReference type="Pfam" id="PF01765">
    <property type="entry name" value="RRF"/>
    <property type="match status" value="1"/>
</dbReference>
<dbReference type="SUPFAM" id="SSF55194">
    <property type="entry name" value="Ribosome recycling factor, RRF"/>
    <property type="match status" value="1"/>
</dbReference>